<protein>
    <recommendedName>
        <fullName>Nucleolar protein 9</fullName>
    </recommendedName>
    <alternativeName>
        <fullName>Pumilio domain-containing protein NOP9</fullName>
    </alternativeName>
</protein>
<comment type="function">
    <text evidence="1">RNA-binding nucleolar protein required for pre-rRNA processing. Involved in production of 18S rRNA and assembly of small ribosomal subunit (By similarity).</text>
</comment>
<comment type="subcellular location">
    <subcellularLocation>
        <location evidence="1">Nucleus</location>
        <location evidence="1">Nucleolus</location>
    </subcellularLocation>
</comment>
<comment type="similarity">
    <text evidence="3">Belongs to the NOP9 family.</text>
</comment>
<reference key="1">
    <citation type="journal article" date="2004" name="Nature">
        <title>Genome evolution in yeasts.</title>
        <authorList>
            <person name="Dujon B."/>
            <person name="Sherman D."/>
            <person name="Fischer G."/>
            <person name="Durrens P."/>
            <person name="Casaregola S."/>
            <person name="Lafontaine I."/>
            <person name="de Montigny J."/>
            <person name="Marck C."/>
            <person name="Neuveglise C."/>
            <person name="Talla E."/>
            <person name="Goffard N."/>
            <person name="Frangeul L."/>
            <person name="Aigle M."/>
            <person name="Anthouard V."/>
            <person name="Babour A."/>
            <person name="Barbe V."/>
            <person name="Barnay S."/>
            <person name="Blanchin S."/>
            <person name="Beckerich J.-M."/>
            <person name="Beyne E."/>
            <person name="Bleykasten C."/>
            <person name="Boisrame A."/>
            <person name="Boyer J."/>
            <person name="Cattolico L."/>
            <person name="Confanioleri F."/>
            <person name="de Daruvar A."/>
            <person name="Despons L."/>
            <person name="Fabre E."/>
            <person name="Fairhead C."/>
            <person name="Ferry-Dumazet H."/>
            <person name="Groppi A."/>
            <person name="Hantraye F."/>
            <person name="Hennequin C."/>
            <person name="Jauniaux N."/>
            <person name="Joyet P."/>
            <person name="Kachouri R."/>
            <person name="Kerrest A."/>
            <person name="Koszul R."/>
            <person name="Lemaire M."/>
            <person name="Lesur I."/>
            <person name="Ma L."/>
            <person name="Muller H."/>
            <person name="Nicaud J.-M."/>
            <person name="Nikolski M."/>
            <person name="Oztas S."/>
            <person name="Ozier-Kalogeropoulos O."/>
            <person name="Pellenz S."/>
            <person name="Potier S."/>
            <person name="Richard G.-F."/>
            <person name="Straub M.-L."/>
            <person name="Suleau A."/>
            <person name="Swennen D."/>
            <person name="Tekaia F."/>
            <person name="Wesolowski-Louvel M."/>
            <person name="Westhof E."/>
            <person name="Wirth B."/>
            <person name="Zeniou-Meyer M."/>
            <person name="Zivanovic Y."/>
            <person name="Bolotin-Fukuhara M."/>
            <person name="Thierry A."/>
            <person name="Bouchier C."/>
            <person name="Caudron B."/>
            <person name="Scarpelli C."/>
            <person name="Gaillardin C."/>
            <person name="Weissenbach J."/>
            <person name="Wincker P."/>
            <person name="Souciet J.-L."/>
        </authorList>
    </citation>
    <scope>NUCLEOTIDE SEQUENCE [LARGE SCALE GENOMIC DNA]</scope>
    <source>
        <strain>ATCC 36239 / CBS 767 / BCRC 21394 / JCM 1990 / NBRC 0083 / IGC 2968</strain>
    </source>
</reference>
<evidence type="ECO:0000250" key="1"/>
<evidence type="ECO:0000256" key="2">
    <source>
        <dbReference type="SAM" id="MobiDB-lite"/>
    </source>
</evidence>
<evidence type="ECO:0000305" key="3"/>
<feature type="chain" id="PRO_0000407812" description="Nucleolar protein 9">
    <location>
        <begin position="1"/>
        <end position="720"/>
    </location>
</feature>
<feature type="repeat" description="Pumilio 1">
    <location>
        <begin position="90"/>
        <end position="125"/>
    </location>
</feature>
<feature type="repeat" description="Pumilio 2">
    <location>
        <begin position="126"/>
        <end position="161"/>
    </location>
</feature>
<feature type="repeat" description="Pumilio 3">
    <location>
        <begin position="198"/>
        <end position="234"/>
    </location>
</feature>
<feature type="repeat" description="Pumilio 4">
    <location>
        <begin position="278"/>
        <end position="318"/>
    </location>
</feature>
<feature type="repeat" description="Pumilio 5">
    <location>
        <begin position="332"/>
        <end position="369"/>
    </location>
</feature>
<feature type="repeat" description="Pumilio 6">
    <location>
        <begin position="371"/>
        <end position="407"/>
    </location>
</feature>
<feature type="repeat" description="Pumilio 7">
    <location>
        <begin position="523"/>
        <end position="560"/>
    </location>
</feature>
<feature type="repeat" description="Pumilio 8">
    <location>
        <begin position="567"/>
        <end position="605"/>
    </location>
</feature>
<feature type="region of interest" description="Disordered" evidence="2">
    <location>
        <begin position="1"/>
        <end position="40"/>
    </location>
</feature>
<feature type="region of interest" description="Disordered" evidence="2">
    <location>
        <begin position="680"/>
        <end position="720"/>
    </location>
</feature>
<feature type="compositionally biased region" description="Basic residues" evidence="2">
    <location>
        <begin position="1"/>
        <end position="13"/>
    </location>
</feature>
<feature type="compositionally biased region" description="Basic and acidic residues" evidence="2">
    <location>
        <begin position="680"/>
        <end position="701"/>
    </location>
</feature>
<name>NOP9_DEBHA</name>
<organism>
    <name type="scientific">Debaryomyces hansenii (strain ATCC 36239 / CBS 767 / BCRC 21394 / JCM 1990 / NBRC 0083 / IGC 2968)</name>
    <name type="common">Yeast</name>
    <name type="synonym">Torulaspora hansenii</name>
    <dbReference type="NCBI Taxonomy" id="284592"/>
    <lineage>
        <taxon>Eukaryota</taxon>
        <taxon>Fungi</taxon>
        <taxon>Dikarya</taxon>
        <taxon>Ascomycota</taxon>
        <taxon>Saccharomycotina</taxon>
        <taxon>Pichiomycetes</taxon>
        <taxon>Debaryomycetaceae</taxon>
        <taxon>Debaryomyces</taxon>
    </lineage>
</organism>
<proteinExistence type="inferred from homology"/>
<sequence length="720" mass="83680">MVQPKVRGRRAEKKSKEVNTQPEDYSPNDRSELEENDDKVESNPALKTTFFGLVDSNEIDYFKQAESTLNVNAFDNDEEREGFIRSVLEEARGKELKLVTNQICSKLMERLVLFATDRQLKNIFRQFSGHFVALAHHKYSSHVLETLLVRAAALIEKELVNDFKQDEGEVDDEISQDNDREDEAVVSMETLFVKMLDEFNPHLKTMVDHQYSSHVLRLLILIIAGKELPSTTTSNSTLRSKKSKIARKMIEIKDNDDFNRSFQTPPSFKDQLRKLCNSLGSKGDMKHMRELAINKVASPVLQLLIQVEGIVDKERTFWHLIFLSENSDKNPQEEAFVEYLLSDSVGSHFLESVIRNGGARMKYIERLYKLYMKDRVLKLSKRSTTGVFIIQALLFKLKPAEVLFILDQIIPELASLISIDENQNLELGKNIIDASISRDNYRREELIEQLFVKFAPNYDRHNPSADTSSEFLENTLHLTGSTLGNTRDDWPTAQERRRSLFLEKLMEYDHSFVVCTWLNFLALPIARFIQMCYHGVFSHVVENSLVVIPASEGEPKSVLIIRKRFLNLFQNEIVNLACNSYGSHIVDRLWNFTVLLNMYKDRIGSELASESHKVKESTYGRLVWKNWSMELFVRKKFDWKSLVKNQEEEYFGVGSHEGQNSTERVKKPIELKFEQMMKEKQMKEERAQKAEEGFNKRKNNEFEYGYDNDNKKAKIRGRNR</sequence>
<accession>Q6BRH3</accession>
<gene>
    <name type="primary">NOP9</name>
    <name type="ordered locus">DEHA2D16368g</name>
</gene>
<keyword id="KW-0539">Nucleus</keyword>
<keyword id="KW-1185">Reference proteome</keyword>
<keyword id="KW-0677">Repeat</keyword>
<keyword id="KW-0690">Ribosome biogenesis</keyword>
<keyword id="KW-0698">rRNA processing</keyword>
<dbReference type="EMBL" id="CR382136">
    <property type="protein sequence ID" value="CAG87368.2"/>
    <property type="molecule type" value="Genomic_DNA"/>
</dbReference>
<dbReference type="RefSeq" id="XP_459197.2">
    <property type="nucleotide sequence ID" value="XM_459197.1"/>
</dbReference>
<dbReference type="SMR" id="Q6BRH3"/>
<dbReference type="FunCoup" id="Q6BRH3">
    <property type="interactions" value="967"/>
</dbReference>
<dbReference type="STRING" id="284592.Q6BRH3"/>
<dbReference type="GeneID" id="2901579"/>
<dbReference type="KEGG" id="dha:DEHA2D16368g"/>
<dbReference type="VEuPathDB" id="FungiDB:DEHA2D16368g"/>
<dbReference type="eggNOG" id="KOG2188">
    <property type="taxonomic scope" value="Eukaryota"/>
</dbReference>
<dbReference type="HOGENOM" id="CLU_008720_1_1_1"/>
<dbReference type="InParanoid" id="Q6BRH3"/>
<dbReference type="OMA" id="CNSYGSH"/>
<dbReference type="OrthoDB" id="392571at2759"/>
<dbReference type="Proteomes" id="UP000000599">
    <property type="component" value="Chromosome D"/>
</dbReference>
<dbReference type="GO" id="GO:0030686">
    <property type="term" value="C:90S preribosome"/>
    <property type="evidence" value="ECO:0007669"/>
    <property type="project" value="EnsemblFungi"/>
</dbReference>
<dbReference type="GO" id="GO:0005730">
    <property type="term" value="C:nucleolus"/>
    <property type="evidence" value="ECO:0007669"/>
    <property type="project" value="UniProtKB-SubCell"/>
</dbReference>
<dbReference type="GO" id="GO:0030688">
    <property type="term" value="C:preribosome, small subunit precursor"/>
    <property type="evidence" value="ECO:0007669"/>
    <property type="project" value="EnsemblFungi"/>
</dbReference>
<dbReference type="GO" id="GO:0032040">
    <property type="term" value="C:small-subunit processome"/>
    <property type="evidence" value="ECO:0007669"/>
    <property type="project" value="EnsemblFungi"/>
</dbReference>
<dbReference type="GO" id="GO:0003729">
    <property type="term" value="F:mRNA binding"/>
    <property type="evidence" value="ECO:0007669"/>
    <property type="project" value="UniProtKB-ARBA"/>
</dbReference>
<dbReference type="GO" id="GO:0000480">
    <property type="term" value="P:endonucleolytic cleavage in 5'-ETS of tricistronic rRNA transcript (SSU-rRNA, 5.8S rRNA, LSU-rRNA)"/>
    <property type="evidence" value="ECO:0007669"/>
    <property type="project" value="EnsemblFungi"/>
</dbReference>
<dbReference type="GO" id="GO:0000447">
    <property type="term" value="P:endonucleolytic cleavage in ITS1 to separate SSU-rRNA from 5.8S rRNA and LSU-rRNA from tricistronic rRNA transcript (SSU-rRNA, 5.8S rRNA, LSU-rRNA)"/>
    <property type="evidence" value="ECO:0007669"/>
    <property type="project" value="EnsemblFungi"/>
</dbReference>
<dbReference type="GO" id="GO:0000472">
    <property type="term" value="P:endonucleolytic cleavage to generate mature 5'-end of SSU-rRNA from (SSU-rRNA, 5.8S rRNA, LSU-rRNA)"/>
    <property type="evidence" value="ECO:0007669"/>
    <property type="project" value="EnsemblFungi"/>
</dbReference>
<dbReference type="GO" id="GO:0010629">
    <property type="term" value="P:negative regulation of gene expression"/>
    <property type="evidence" value="ECO:0007669"/>
    <property type="project" value="UniProtKB-ARBA"/>
</dbReference>
<dbReference type="GO" id="GO:0010608">
    <property type="term" value="P:post-transcriptional regulation of gene expression"/>
    <property type="evidence" value="ECO:0007669"/>
    <property type="project" value="UniProtKB-ARBA"/>
</dbReference>
<dbReference type="GO" id="GO:0065008">
    <property type="term" value="P:regulation of biological quality"/>
    <property type="evidence" value="ECO:0007669"/>
    <property type="project" value="UniProtKB-ARBA"/>
</dbReference>
<dbReference type="GO" id="GO:0000056">
    <property type="term" value="P:ribosomal small subunit export from nucleus"/>
    <property type="evidence" value="ECO:0007669"/>
    <property type="project" value="EnsemblFungi"/>
</dbReference>
<dbReference type="Gene3D" id="1.25.10.10">
    <property type="entry name" value="Leucine-rich Repeat Variant"/>
    <property type="match status" value="3"/>
</dbReference>
<dbReference type="InterPro" id="IPR011989">
    <property type="entry name" value="ARM-like"/>
</dbReference>
<dbReference type="InterPro" id="IPR016024">
    <property type="entry name" value="ARM-type_fold"/>
</dbReference>
<dbReference type="InterPro" id="IPR040000">
    <property type="entry name" value="NOP9"/>
</dbReference>
<dbReference type="InterPro" id="IPR033133">
    <property type="entry name" value="PUM-HD"/>
</dbReference>
<dbReference type="InterPro" id="IPR001313">
    <property type="entry name" value="Pumilio_RNA-bd_rpt"/>
</dbReference>
<dbReference type="PANTHER" id="PTHR13102">
    <property type="entry name" value="NUCLEOLAR PROTEIN 9"/>
    <property type="match status" value="1"/>
</dbReference>
<dbReference type="PANTHER" id="PTHR13102:SF0">
    <property type="entry name" value="NUCLEOLAR PROTEIN 9"/>
    <property type="match status" value="1"/>
</dbReference>
<dbReference type="Pfam" id="PF22493">
    <property type="entry name" value="PUF_NOP9"/>
    <property type="match status" value="1"/>
</dbReference>
<dbReference type="SMART" id="SM00025">
    <property type="entry name" value="Pumilio"/>
    <property type="match status" value="8"/>
</dbReference>
<dbReference type="SUPFAM" id="SSF48371">
    <property type="entry name" value="ARM repeat"/>
    <property type="match status" value="1"/>
</dbReference>
<dbReference type="PROSITE" id="PS50302">
    <property type="entry name" value="PUM"/>
    <property type="match status" value="6"/>
</dbReference>
<dbReference type="PROSITE" id="PS50303">
    <property type="entry name" value="PUM_HD"/>
    <property type="match status" value="1"/>
</dbReference>